<keyword id="KW-0456">Lyase</keyword>
<keyword id="KW-0663">Pyridoxal phosphate</keyword>
<protein>
    <recommendedName>
        <fullName evidence="1">Probable D-serine dehydratase</fullName>
        <ecNumber evidence="1">4.3.1.18</ecNumber>
    </recommendedName>
    <alternativeName>
        <fullName evidence="1">D-serine deaminase</fullName>
        <shortName evidence="1">DSD</shortName>
    </alternativeName>
</protein>
<accession>A1TPW5</accession>
<feature type="chain" id="PRO_0000291716" description="Probable D-serine dehydratase">
    <location>
        <begin position="1"/>
        <end position="451"/>
    </location>
</feature>
<feature type="region of interest" description="Disordered" evidence="2">
    <location>
        <begin position="1"/>
        <end position="55"/>
    </location>
</feature>
<feature type="compositionally biased region" description="Low complexity" evidence="2">
    <location>
        <begin position="22"/>
        <end position="35"/>
    </location>
</feature>
<feature type="modified residue" description="N6-(pyridoxal phosphate)lysine" evidence="1">
    <location>
        <position position="118"/>
    </location>
</feature>
<proteinExistence type="inferred from homology"/>
<organism>
    <name type="scientific">Paracidovorax citrulli (strain AAC00-1)</name>
    <name type="common">Acidovorax citrulli</name>
    <dbReference type="NCBI Taxonomy" id="397945"/>
    <lineage>
        <taxon>Bacteria</taxon>
        <taxon>Pseudomonadati</taxon>
        <taxon>Pseudomonadota</taxon>
        <taxon>Betaproteobacteria</taxon>
        <taxon>Burkholderiales</taxon>
        <taxon>Comamonadaceae</taxon>
        <taxon>Paracidovorax</taxon>
    </lineage>
</organism>
<dbReference type="EC" id="4.3.1.18" evidence="1"/>
<dbReference type="EMBL" id="CP000512">
    <property type="protein sequence ID" value="ABM33003.1"/>
    <property type="status" value="ALT_INIT"/>
    <property type="molecule type" value="Genomic_DNA"/>
</dbReference>
<dbReference type="SMR" id="A1TPW5"/>
<dbReference type="STRING" id="397945.Aave_2428"/>
<dbReference type="KEGG" id="aav:Aave_2428"/>
<dbReference type="eggNOG" id="COG3048">
    <property type="taxonomic scope" value="Bacteria"/>
</dbReference>
<dbReference type="HOGENOM" id="CLU_035707_0_0_4"/>
<dbReference type="Proteomes" id="UP000002596">
    <property type="component" value="Chromosome"/>
</dbReference>
<dbReference type="GO" id="GO:0008721">
    <property type="term" value="F:D-serine ammonia-lyase activity"/>
    <property type="evidence" value="ECO:0007669"/>
    <property type="project" value="UniProtKB-EC"/>
</dbReference>
<dbReference type="GO" id="GO:0016836">
    <property type="term" value="F:hydro-lyase activity"/>
    <property type="evidence" value="ECO:0007669"/>
    <property type="project" value="UniProtKB-UniRule"/>
</dbReference>
<dbReference type="GO" id="GO:0030170">
    <property type="term" value="F:pyridoxal phosphate binding"/>
    <property type="evidence" value="ECO:0007669"/>
    <property type="project" value="InterPro"/>
</dbReference>
<dbReference type="GO" id="GO:0036088">
    <property type="term" value="P:D-serine catabolic process"/>
    <property type="evidence" value="ECO:0007669"/>
    <property type="project" value="TreeGrafter"/>
</dbReference>
<dbReference type="GO" id="GO:0009097">
    <property type="term" value="P:isoleucine biosynthetic process"/>
    <property type="evidence" value="ECO:0007669"/>
    <property type="project" value="TreeGrafter"/>
</dbReference>
<dbReference type="Gene3D" id="3.40.50.1100">
    <property type="match status" value="2"/>
</dbReference>
<dbReference type="HAMAP" id="MF_01030">
    <property type="entry name" value="D_Ser_dehydrat"/>
    <property type="match status" value="1"/>
</dbReference>
<dbReference type="InterPro" id="IPR011780">
    <property type="entry name" value="D_Ser_am_lyase"/>
</dbReference>
<dbReference type="InterPro" id="IPR050147">
    <property type="entry name" value="Ser/Thr_Dehydratase"/>
</dbReference>
<dbReference type="InterPro" id="IPR001926">
    <property type="entry name" value="TrpB-like_PALP"/>
</dbReference>
<dbReference type="InterPro" id="IPR036052">
    <property type="entry name" value="TrpB-like_PALP_sf"/>
</dbReference>
<dbReference type="NCBIfam" id="TIGR02035">
    <property type="entry name" value="D_Ser_am_lyase"/>
    <property type="match status" value="1"/>
</dbReference>
<dbReference type="NCBIfam" id="NF002823">
    <property type="entry name" value="PRK02991.1"/>
    <property type="match status" value="1"/>
</dbReference>
<dbReference type="PANTHER" id="PTHR48078:SF9">
    <property type="entry name" value="D-SERINE DEHYDRATASE"/>
    <property type="match status" value="1"/>
</dbReference>
<dbReference type="PANTHER" id="PTHR48078">
    <property type="entry name" value="THREONINE DEHYDRATASE, MITOCHONDRIAL-RELATED"/>
    <property type="match status" value="1"/>
</dbReference>
<dbReference type="Pfam" id="PF00291">
    <property type="entry name" value="PALP"/>
    <property type="match status" value="1"/>
</dbReference>
<dbReference type="SUPFAM" id="SSF53686">
    <property type="entry name" value="Tryptophan synthase beta subunit-like PLP-dependent enzymes"/>
    <property type="match status" value="1"/>
</dbReference>
<comment type="catalytic activity">
    <reaction evidence="1">
        <text>D-serine = pyruvate + NH4(+)</text>
        <dbReference type="Rhea" id="RHEA:13977"/>
        <dbReference type="ChEBI" id="CHEBI:15361"/>
        <dbReference type="ChEBI" id="CHEBI:28938"/>
        <dbReference type="ChEBI" id="CHEBI:35247"/>
        <dbReference type="EC" id="4.3.1.18"/>
    </reaction>
</comment>
<comment type="cofactor">
    <cofactor evidence="1">
        <name>pyridoxal 5'-phosphate</name>
        <dbReference type="ChEBI" id="CHEBI:597326"/>
    </cofactor>
</comment>
<comment type="similarity">
    <text evidence="1">Belongs to the serine/threonine dehydratase family. DsdA subfamily.</text>
</comment>
<comment type="sequence caution" evidence="3">
    <conflict type="erroneous initiation">
        <sequence resource="EMBL-CDS" id="ABM33003"/>
    </conflict>
</comment>
<sequence length="451" mass="47903">MPGRTRPSCRLAITFTPRPDSATPRAGRAAPATGRRSNRSRSTLSATASPMPRRPHRIRSLGLLDRRDNYLDMLRTGGGIESPLIEAGALSDAMGLEPGCGRLWIKADHGLPVAGSIKARGGIHEVLEFAETLAVREGLLSPGQDCRVLAEPAAREVFGRHQVAVGSTGNLGLSIGVAASALGFRAAVHMSADAKEWKKERLRRRGVEVVEHAGDYERAVAAGRSQAQADPFSHFVDDERSLSLLLGYSAAALHLRGQLAEQGIVVDAKHPLFVYLPCGVGGAPAGITFGLRQLLGPHVHCFFAEPVQSPCFLVQMAAPAGTHPSVYDLGLTNRTEADGLAVPRASLLAAGLMQPLLSGIFTVRDDTLFEHLVRVLDATGERIEPSAAAGFSGPALLTGSDGGRLWLRAQGLDVQLPQATHLVWTTGGLFVPEAEHQRFEARGRSLLEAAA</sequence>
<gene>
    <name evidence="1" type="primary">dsdA</name>
    <name type="ordered locus">Aave_2428</name>
</gene>
<reference key="1">
    <citation type="submission" date="2006-12" db="EMBL/GenBank/DDBJ databases">
        <title>Complete sequence of Acidovorax avenae subsp. citrulli AAC00-1.</title>
        <authorList>
            <person name="Copeland A."/>
            <person name="Lucas S."/>
            <person name="Lapidus A."/>
            <person name="Barry K."/>
            <person name="Detter J.C."/>
            <person name="Glavina del Rio T."/>
            <person name="Dalin E."/>
            <person name="Tice H."/>
            <person name="Pitluck S."/>
            <person name="Kiss H."/>
            <person name="Brettin T."/>
            <person name="Bruce D."/>
            <person name="Han C."/>
            <person name="Tapia R."/>
            <person name="Gilna P."/>
            <person name="Schmutz J."/>
            <person name="Larimer F."/>
            <person name="Land M."/>
            <person name="Hauser L."/>
            <person name="Kyrpides N."/>
            <person name="Kim E."/>
            <person name="Stahl D."/>
            <person name="Richardson P."/>
        </authorList>
    </citation>
    <scope>NUCLEOTIDE SEQUENCE [LARGE SCALE GENOMIC DNA]</scope>
    <source>
        <strain>AAC00-1</strain>
    </source>
</reference>
<evidence type="ECO:0000255" key="1">
    <source>
        <dbReference type="HAMAP-Rule" id="MF_01030"/>
    </source>
</evidence>
<evidence type="ECO:0000256" key="2">
    <source>
        <dbReference type="SAM" id="MobiDB-lite"/>
    </source>
</evidence>
<evidence type="ECO:0000305" key="3"/>
<name>SDHD_PARC0</name>